<accession>Q15172</accession>
<accession>B2R6D2</accession>
<accession>B7Z7L2</accession>
<accession>D3DT99</accession>
<accession>Q2NL72</accession>
<accession>Q5VVB2</accession>
<accession>Q8TBI9</accession>
<name>2A5A_HUMAN</name>
<feature type="initiator methionine" description="Removed" evidence="9">
    <location>
        <position position="1"/>
    </location>
</feature>
<feature type="chain" id="PRO_0000071448" description="Serine/threonine-protein phosphatase 2A 56 kDa regulatory subunit alpha isoform">
    <location>
        <begin position="2"/>
        <end position="486"/>
    </location>
</feature>
<feature type="region of interest" description="Disordered" evidence="1">
    <location>
        <begin position="1"/>
        <end position="52"/>
    </location>
</feature>
<feature type="compositionally biased region" description="Low complexity" evidence="1">
    <location>
        <begin position="1"/>
        <end position="18"/>
    </location>
</feature>
<feature type="compositionally biased region" description="Basic residues" evidence="1">
    <location>
        <begin position="27"/>
        <end position="37"/>
    </location>
</feature>
<feature type="compositionally biased region" description="Low complexity" evidence="1">
    <location>
        <begin position="38"/>
        <end position="51"/>
    </location>
</feature>
<feature type="modified residue" description="N-acetylserine" evidence="9">
    <location>
        <position position="2"/>
    </location>
</feature>
<feature type="modified residue" description="Phosphoserine" evidence="6 7 8 10">
    <location>
        <position position="41"/>
    </location>
</feature>
<feature type="modified residue" description="Phosphoserine" evidence="6 7 8 10">
    <location>
        <position position="42"/>
    </location>
</feature>
<feature type="modified residue" description="Phosphoserine" evidence="10">
    <location>
        <position position="49"/>
    </location>
</feature>
<feature type="splice variant" id="VSP_042889" description="In isoform 2." evidence="4">
    <original>MSSSSPPAGAASAAISASEKVDGFTRKSVRKAQRQKRSQGSSQFRSQGSQAELHPLPQLKD</original>
    <variation>MIMN</variation>
    <location>
        <begin position="1"/>
        <end position="61"/>
    </location>
</feature>
<feature type="sequence conflict" description="In Ref. 6; AA sequence." evidence="5" ref="6">
    <original>E</original>
    <variation>F</variation>
    <location>
        <position position="52"/>
    </location>
</feature>
<feature type="sequence conflict" description="In Ref. 6; AA sequence." evidence="5" ref="6">
    <original>H</original>
    <variation>S</variation>
    <location>
        <position position="54"/>
    </location>
</feature>
<feature type="sequence conflict" description="In Ref. 5; AAH22474." evidence="5" ref="5">
    <original>Q</original>
    <variation>R</variation>
    <location>
        <position position="176"/>
    </location>
</feature>
<feature type="sequence conflict" description="In Ref. 5; AAH22474." evidence="5" ref="5">
    <original>D</original>
    <variation>N</variation>
    <location>
        <position position="389"/>
    </location>
</feature>
<feature type="sequence conflict" description="In Ref. 6; AA sequence." evidence="5" ref="6">
    <original>R</original>
    <variation>E</variation>
    <location>
        <position position="451"/>
    </location>
</feature>
<organism>
    <name type="scientific">Homo sapiens</name>
    <name type="common">Human</name>
    <dbReference type="NCBI Taxonomy" id="9606"/>
    <lineage>
        <taxon>Eukaryota</taxon>
        <taxon>Metazoa</taxon>
        <taxon>Chordata</taxon>
        <taxon>Craniata</taxon>
        <taxon>Vertebrata</taxon>
        <taxon>Euteleostomi</taxon>
        <taxon>Mammalia</taxon>
        <taxon>Eutheria</taxon>
        <taxon>Euarchontoglires</taxon>
        <taxon>Primates</taxon>
        <taxon>Haplorrhini</taxon>
        <taxon>Catarrhini</taxon>
        <taxon>Hominidae</taxon>
        <taxon>Homo</taxon>
    </lineage>
</organism>
<gene>
    <name type="primary">PPP2R5A</name>
</gene>
<keyword id="KW-0002">3D-structure</keyword>
<keyword id="KW-0007">Acetylation</keyword>
<keyword id="KW-0025">Alternative splicing</keyword>
<keyword id="KW-0137">Centromere</keyword>
<keyword id="KW-0158">Chromosome</keyword>
<keyword id="KW-0963">Cytoplasm</keyword>
<keyword id="KW-0903">Direct protein sequencing</keyword>
<keyword id="KW-0539">Nucleus</keyword>
<keyword id="KW-0597">Phosphoprotein</keyword>
<keyword id="KW-1267">Proteomics identification</keyword>
<keyword id="KW-1185">Reference proteome</keyword>
<evidence type="ECO:0000256" key="1">
    <source>
        <dbReference type="SAM" id="MobiDB-lite"/>
    </source>
</evidence>
<evidence type="ECO:0000269" key="2">
    <source>
    </source>
</evidence>
<evidence type="ECO:0000269" key="3">
    <source>
    </source>
</evidence>
<evidence type="ECO:0000303" key="4">
    <source>
    </source>
</evidence>
<evidence type="ECO:0000305" key="5"/>
<evidence type="ECO:0007744" key="6">
    <source>
    </source>
</evidence>
<evidence type="ECO:0007744" key="7">
    <source>
    </source>
</evidence>
<evidence type="ECO:0007744" key="8">
    <source>
    </source>
</evidence>
<evidence type="ECO:0007744" key="9">
    <source>
    </source>
</evidence>
<evidence type="ECO:0007744" key="10">
    <source>
    </source>
</evidence>
<protein>
    <recommendedName>
        <fullName>Serine/threonine-protein phosphatase 2A 56 kDa regulatory subunit alpha isoform</fullName>
    </recommendedName>
    <alternativeName>
        <fullName>PP2A B subunit isoform B'-alpha</fullName>
    </alternativeName>
    <alternativeName>
        <fullName>PP2A B subunit isoform B56-alpha</fullName>
    </alternativeName>
    <alternativeName>
        <fullName>PP2A B subunit isoform PR61-alpha</fullName>
        <shortName>PR61alpha</shortName>
    </alternativeName>
    <alternativeName>
        <fullName>PP2A B subunit isoform R5-alpha</fullName>
    </alternativeName>
</protein>
<dbReference type="EMBL" id="L42373">
    <property type="protein sequence ID" value="AAC37601.1"/>
    <property type="molecule type" value="mRNA"/>
</dbReference>
<dbReference type="EMBL" id="AK302202">
    <property type="protein sequence ID" value="BAH13648.1"/>
    <property type="molecule type" value="mRNA"/>
</dbReference>
<dbReference type="EMBL" id="AK312530">
    <property type="protein sequence ID" value="BAG35429.1"/>
    <property type="molecule type" value="mRNA"/>
</dbReference>
<dbReference type="EMBL" id="AL451060">
    <property type="status" value="NOT_ANNOTATED_CDS"/>
    <property type="molecule type" value="Genomic_DNA"/>
</dbReference>
<dbReference type="EMBL" id="AL360091">
    <property type="status" value="NOT_ANNOTATED_CDS"/>
    <property type="molecule type" value="Genomic_DNA"/>
</dbReference>
<dbReference type="EMBL" id="CH471100">
    <property type="protein sequence ID" value="EAW93392.1"/>
    <property type="molecule type" value="Genomic_DNA"/>
</dbReference>
<dbReference type="EMBL" id="CH471100">
    <property type="protein sequence ID" value="EAW93393.1"/>
    <property type="molecule type" value="Genomic_DNA"/>
</dbReference>
<dbReference type="EMBL" id="BC022474">
    <property type="protein sequence ID" value="AAH22474.1"/>
    <property type="molecule type" value="mRNA"/>
</dbReference>
<dbReference type="EMBL" id="BC110883">
    <property type="protein sequence ID" value="AAI10884.1"/>
    <property type="molecule type" value="mRNA"/>
</dbReference>
<dbReference type="CCDS" id="CCDS1503.1">
    <molecule id="Q15172-1"/>
</dbReference>
<dbReference type="CCDS" id="CCDS55686.1">
    <molecule id="Q15172-2"/>
</dbReference>
<dbReference type="PIR" id="I55449">
    <property type="entry name" value="I55449"/>
</dbReference>
<dbReference type="RefSeq" id="NP_001186685.1">
    <molecule id="Q15172-2"/>
    <property type="nucleotide sequence ID" value="NM_001199756.2"/>
</dbReference>
<dbReference type="RefSeq" id="NP_006234.1">
    <molecule id="Q15172-1"/>
    <property type="nucleotide sequence ID" value="NM_006243.4"/>
</dbReference>
<dbReference type="PDB" id="6NTS">
    <property type="method" value="EM"/>
    <property type="resolution" value="3.63 A"/>
    <property type="chains" value="B=1-486"/>
</dbReference>
<dbReference type="PDB" id="8SZK">
    <property type="method" value="EM"/>
    <property type="resolution" value="3.58 A"/>
    <property type="chains" value="D=1-486"/>
</dbReference>
<dbReference type="PDBsum" id="6NTS"/>
<dbReference type="PDBsum" id="8SZK"/>
<dbReference type="EMDB" id="EMD-0510"/>
<dbReference type="EMDB" id="EMD-40919"/>
<dbReference type="SMR" id="Q15172"/>
<dbReference type="BioGRID" id="111517">
    <property type="interactions" value="84"/>
</dbReference>
<dbReference type="CORUM" id="Q15172"/>
<dbReference type="DIP" id="DIP-459N"/>
<dbReference type="ELM" id="Q15172"/>
<dbReference type="FunCoup" id="Q15172">
    <property type="interactions" value="2738"/>
</dbReference>
<dbReference type="IntAct" id="Q15172">
    <property type="interactions" value="61"/>
</dbReference>
<dbReference type="MINT" id="Q15172"/>
<dbReference type="STRING" id="9606.ENSP00000261461"/>
<dbReference type="BindingDB" id="Q15172"/>
<dbReference type="ChEMBL" id="CHEMBL4763"/>
<dbReference type="iPTMnet" id="Q15172"/>
<dbReference type="PhosphoSitePlus" id="Q15172"/>
<dbReference type="BioMuta" id="PPP2R5A"/>
<dbReference type="DMDM" id="7387496"/>
<dbReference type="OGP" id="Q15172"/>
<dbReference type="jPOST" id="Q15172"/>
<dbReference type="MassIVE" id="Q15172"/>
<dbReference type="PaxDb" id="9606-ENSP00000261461"/>
<dbReference type="PeptideAtlas" id="Q15172"/>
<dbReference type="ProteomicsDB" id="60481"/>
<dbReference type="ProteomicsDB" id="60482">
    <molecule id="Q15172-2"/>
</dbReference>
<dbReference type="Pumba" id="Q15172"/>
<dbReference type="Antibodypedia" id="34606">
    <property type="antibodies" value="270 antibodies from 36 providers"/>
</dbReference>
<dbReference type="DNASU" id="5525"/>
<dbReference type="Ensembl" id="ENST00000261461.7">
    <molecule id="Q15172-1"/>
    <property type="protein sequence ID" value="ENSP00000261461.2"/>
    <property type="gene ID" value="ENSG00000066027.12"/>
</dbReference>
<dbReference type="Ensembl" id="ENST00000537030.3">
    <molecule id="Q15172-2"/>
    <property type="protein sequence ID" value="ENSP00000442866.1"/>
    <property type="gene ID" value="ENSG00000066027.12"/>
</dbReference>
<dbReference type="GeneID" id="5525"/>
<dbReference type="KEGG" id="hsa:5525"/>
<dbReference type="MANE-Select" id="ENST00000261461.7">
    <property type="protein sequence ID" value="ENSP00000261461.2"/>
    <property type="RefSeq nucleotide sequence ID" value="NM_006243.4"/>
    <property type="RefSeq protein sequence ID" value="NP_006234.1"/>
</dbReference>
<dbReference type="UCSC" id="uc001hjb.3">
    <molecule id="Q15172-1"/>
    <property type="organism name" value="human"/>
</dbReference>
<dbReference type="AGR" id="HGNC:9309"/>
<dbReference type="CTD" id="5525"/>
<dbReference type="DisGeNET" id="5525"/>
<dbReference type="GeneCards" id="PPP2R5A"/>
<dbReference type="HGNC" id="HGNC:9309">
    <property type="gene designation" value="PPP2R5A"/>
</dbReference>
<dbReference type="HPA" id="ENSG00000066027">
    <property type="expression patterns" value="Low tissue specificity"/>
</dbReference>
<dbReference type="MIM" id="601643">
    <property type="type" value="gene"/>
</dbReference>
<dbReference type="neXtProt" id="NX_Q15172"/>
<dbReference type="OpenTargets" id="ENSG00000066027"/>
<dbReference type="PharmGKB" id="PA33672"/>
<dbReference type="VEuPathDB" id="HostDB:ENSG00000066027"/>
<dbReference type="eggNOG" id="KOG2085">
    <property type="taxonomic scope" value="Eukaryota"/>
</dbReference>
<dbReference type="GeneTree" id="ENSGT01030000234620"/>
<dbReference type="HOGENOM" id="CLU_012437_4_0_1"/>
<dbReference type="InParanoid" id="Q15172"/>
<dbReference type="OMA" id="LIYPEVI"/>
<dbReference type="OrthoDB" id="10264446at2759"/>
<dbReference type="PAN-GO" id="Q15172">
    <property type="GO annotations" value="5 GO annotations based on evolutionary models"/>
</dbReference>
<dbReference type="PhylomeDB" id="Q15172"/>
<dbReference type="TreeFam" id="TF105556"/>
<dbReference type="PathwayCommons" id="Q15172"/>
<dbReference type="Reactome" id="R-HSA-141444">
    <property type="pathway name" value="Amplification of signal from unattached kinetochores via a MAD2 inhibitory signal"/>
</dbReference>
<dbReference type="Reactome" id="R-HSA-195253">
    <property type="pathway name" value="Degradation of beta-catenin by the destruction complex"/>
</dbReference>
<dbReference type="Reactome" id="R-HSA-196299">
    <property type="pathway name" value="Beta-catenin phosphorylation cascade"/>
</dbReference>
<dbReference type="Reactome" id="R-HSA-2467813">
    <property type="pathway name" value="Separation of Sister Chromatids"/>
</dbReference>
<dbReference type="Reactome" id="R-HSA-2500257">
    <property type="pathway name" value="Resolution of Sister Chromatid Cohesion"/>
</dbReference>
<dbReference type="Reactome" id="R-HSA-389356">
    <property type="pathway name" value="Co-stimulation by CD28"/>
</dbReference>
<dbReference type="Reactome" id="R-HSA-389513">
    <property type="pathway name" value="Co-inhibition by CTLA4"/>
</dbReference>
<dbReference type="Reactome" id="R-HSA-432142">
    <property type="pathway name" value="Platelet sensitization by LDL"/>
</dbReference>
<dbReference type="Reactome" id="R-HSA-4641262">
    <property type="pathway name" value="Disassembly of the destruction complex and recruitment of AXIN to the membrane"/>
</dbReference>
<dbReference type="Reactome" id="R-HSA-5339716">
    <property type="pathway name" value="Signaling by GSK3beta mutants"/>
</dbReference>
<dbReference type="Reactome" id="R-HSA-5358747">
    <property type="pathway name" value="CTNNB1 S33 mutants aren't phosphorylated"/>
</dbReference>
<dbReference type="Reactome" id="R-HSA-5358749">
    <property type="pathway name" value="CTNNB1 S37 mutants aren't phosphorylated"/>
</dbReference>
<dbReference type="Reactome" id="R-HSA-5358751">
    <property type="pathway name" value="CTNNB1 S45 mutants aren't phosphorylated"/>
</dbReference>
<dbReference type="Reactome" id="R-HSA-5358752">
    <property type="pathway name" value="CTNNB1 T41 mutants aren't phosphorylated"/>
</dbReference>
<dbReference type="Reactome" id="R-HSA-5467337">
    <property type="pathway name" value="APC truncation mutants have impaired AXIN binding"/>
</dbReference>
<dbReference type="Reactome" id="R-HSA-5467340">
    <property type="pathway name" value="AXIN missense mutants destabilize the destruction complex"/>
</dbReference>
<dbReference type="Reactome" id="R-HSA-5467348">
    <property type="pathway name" value="Truncations of AMER1 destabilize the destruction complex"/>
</dbReference>
<dbReference type="Reactome" id="R-HSA-5663220">
    <property type="pathway name" value="RHO GTPases Activate Formins"/>
</dbReference>
<dbReference type="Reactome" id="R-HSA-5673000">
    <property type="pathway name" value="RAF activation"/>
</dbReference>
<dbReference type="Reactome" id="R-HSA-5675221">
    <property type="pathway name" value="Negative regulation of MAPK pathway"/>
</dbReference>
<dbReference type="Reactome" id="R-HSA-6811558">
    <property type="pathway name" value="PI5P, PP2A and IER3 Regulate PI3K/AKT Signaling"/>
</dbReference>
<dbReference type="Reactome" id="R-HSA-68877">
    <property type="pathway name" value="Mitotic Prometaphase"/>
</dbReference>
<dbReference type="Reactome" id="R-HSA-9648025">
    <property type="pathway name" value="EML4 and NUDC in mitotic spindle formation"/>
</dbReference>
<dbReference type="Reactome" id="R-HSA-9833482">
    <property type="pathway name" value="PKR-mediated signaling"/>
</dbReference>
<dbReference type="SignaLink" id="Q15172"/>
<dbReference type="SIGNOR" id="Q15172"/>
<dbReference type="BioGRID-ORCS" id="5525">
    <property type="hits" value="20 hits in 1167 CRISPR screens"/>
</dbReference>
<dbReference type="CD-CODE" id="8C2F96ED">
    <property type="entry name" value="Centrosome"/>
</dbReference>
<dbReference type="ChiTaRS" id="PPP2R5A">
    <property type="organism name" value="human"/>
</dbReference>
<dbReference type="GeneWiki" id="PPP2R5A"/>
<dbReference type="GenomeRNAi" id="5525"/>
<dbReference type="Pharos" id="Q15172">
    <property type="development level" value="Tchem"/>
</dbReference>
<dbReference type="PRO" id="PR:Q15172"/>
<dbReference type="Proteomes" id="UP000005640">
    <property type="component" value="Chromosome 1"/>
</dbReference>
<dbReference type="RNAct" id="Q15172">
    <property type="molecule type" value="protein"/>
</dbReference>
<dbReference type="Bgee" id="ENSG00000066027">
    <property type="expression patterns" value="Expressed in monocyte and 205 other cell types or tissues"/>
</dbReference>
<dbReference type="GO" id="GO:0005813">
    <property type="term" value="C:centrosome"/>
    <property type="evidence" value="ECO:0000314"/>
    <property type="project" value="UniProtKB"/>
</dbReference>
<dbReference type="GO" id="GO:0000775">
    <property type="term" value="C:chromosome, centromeric region"/>
    <property type="evidence" value="ECO:0007669"/>
    <property type="project" value="UniProtKB-SubCell"/>
</dbReference>
<dbReference type="GO" id="GO:0005737">
    <property type="term" value="C:cytoplasm"/>
    <property type="evidence" value="ECO:0000314"/>
    <property type="project" value="BHF-UCL"/>
</dbReference>
<dbReference type="GO" id="GO:0005829">
    <property type="term" value="C:cytosol"/>
    <property type="evidence" value="ECO:0000314"/>
    <property type="project" value="HPA"/>
</dbReference>
<dbReference type="GO" id="GO:0031430">
    <property type="term" value="C:M band"/>
    <property type="evidence" value="ECO:0000250"/>
    <property type="project" value="BHF-UCL"/>
</dbReference>
<dbReference type="GO" id="GO:0005634">
    <property type="term" value="C:nucleus"/>
    <property type="evidence" value="ECO:0000318"/>
    <property type="project" value="GO_Central"/>
</dbReference>
<dbReference type="GO" id="GO:0005886">
    <property type="term" value="C:plasma membrane"/>
    <property type="evidence" value="ECO:0000314"/>
    <property type="project" value="BHF-UCL"/>
</dbReference>
<dbReference type="GO" id="GO:0000159">
    <property type="term" value="C:protein phosphatase type 2A complex"/>
    <property type="evidence" value="ECO:0000314"/>
    <property type="project" value="UniProtKB"/>
</dbReference>
<dbReference type="GO" id="GO:0030018">
    <property type="term" value="C:Z disc"/>
    <property type="evidence" value="ECO:0000314"/>
    <property type="project" value="BHF-UCL"/>
</dbReference>
<dbReference type="GO" id="GO:0019900">
    <property type="term" value="F:kinase binding"/>
    <property type="evidence" value="ECO:0000353"/>
    <property type="project" value="BHF-UCL"/>
</dbReference>
<dbReference type="GO" id="GO:0019888">
    <property type="term" value="F:protein phosphatase regulator activity"/>
    <property type="evidence" value="ECO:0000314"/>
    <property type="project" value="UniProtKB"/>
</dbReference>
<dbReference type="GO" id="GO:1903077">
    <property type="term" value="P:negative regulation of protein localization to plasma membrane"/>
    <property type="evidence" value="ECO:0000315"/>
    <property type="project" value="BHF-UCL"/>
</dbReference>
<dbReference type="GO" id="GO:0007165">
    <property type="term" value="P:signal transduction"/>
    <property type="evidence" value="ECO:0007669"/>
    <property type="project" value="InterPro"/>
</dbReference>
<dbReference type="FunFam" id="1.25.10.10:FF:000010">
    <property type="entry name" value="Serine/threonine-protein phosphatase 2A 56 kDa regulatory subunit"/>
    <property type="match status" value="1"/>
</dbReference>
<dbReference type="Gene3D" id="1.25.10.10">
    <property type="entry name" value="Leucine-rich Repeat Variant"/>
    <property type="match status" value="1"/>
</dbReference>
<dbReference type="InterPro" id="IPR011989">
    <property type="entry name" value="ARM-like"/>
</dbReference>
<dbReference type="InterPro" id="IPR016024">
    <property type="entry name" value="ARM-type_fold"/>
</dbReference>
<dbReference type="InterPro" id="IPR002554">
    <property type="entry name" value="PP2A_B56"/>
</dbReference>
<dbReference type="PANTHER" id="PTHR10257">
    <property type="entry name" value="SERINE/THREONINE PROTEIN PHOSPHATASE 2A PP2A REGULATORY SUBUNIT B"/>
    <property type="match status" value="1"/>
</dbReference>
<dbReference type="PANTHER" id="PTHR10257:SF6">
    <property type="entry name" value="SERINE_THREONINE-PROTEIN PHOSPHATASE 2A 56 KDA REGULATORY SUBUNIT ALPHA ISOFORM"/>
    <property type="match status" value="1"/>
</dbReference>
<dbReference type="Pfam" id="PF01603">
    <property type="entry name" value="B56"/>
    <property type="match status" value="1"/>
</dbReference>
<dbReference type="PIRSF" id="PIRSF028043">
    <property type="entry name" value="PP2A_B56"/>
    <property type="match status" value="1"/>
</dbReference>
<dbReference type="SUPFAM" id="SSF48371">
    <property type="entry name" value="ARM repeat"/>
    <property type="match status" value="1"/>
</dbReference>
<comment type="function">
    <text>The B regulatory subunit might modulate substrate selectivity and catalytic activity, and might also direct the localization of the catalytic enzyme to a particular subcellular compartment.</text>
</comment>
<comment type="subunit">
    <text evidence="2">PP2A consists of a common heterodimeric core enzyme, composed of a 36 kDa catalytic subunit (subunit C) and a 65 kDa constant regulatory subunit (PR65 or subunit A), that associates with a variety of regulatory subunits. Proteins that associate with the core dimer include three families of regulatory subunits B (the R2/B/PR55/B55, R3/B''/PR72/PR130/PR59 and R5/B'/B56 families), the 48 kDa variable regulatory subunit, viral proteins, and cell signaling molecules. Interacts with SGO1.</text>
</comment>
<comment type="interaction">
    <interactant intactId="EBI-641666">
        <id>Q15172</id>
    </interactant>
    <interactant intactId="EBI-77613">
        <id>P05067</id>
        <label>APP</label>
    </interactant>
    <organismsDiffer>false</organismsDiffer>
    <experiments>3</experiments>
</comment>
<comment type="interaction">
    <interactant intactId="EBI-641666">
        <id>Q15172</id>
    </interactant>
    <interactant intactId="EBI-4400025">
        <id>Q9Y2T1</id>
        <label>AXIN2</label>
    </interactant>
    <organismsDiffer>false</organismsDiffer>
    <experiments>3</experiments>
</comment>
<comment type="interaction">
    <interactant intactId="EBI-641666">
        <id>Q15172</id>
    </interactant>
    <interactant intactId="EBI-10305393">
        <id>Q9H246</id>
        <label>C1orf21</label>
    </interactant>
    <organismsDiffer>false</organismsDiffer>
    <experiments>7</experiments>
</comment>
<comment type="interaction">
    <interactant intactId="EBI-641666">
        <id>Q15172</id>
    </interactant>
    <interactant intactId="EBI-1180783">
        <id>O96017</id>
        <label>CHEK2</label>
    </interactant>
    <organismsDiffer>false</organismsDiffer>
    <experiments>3</experiments>
</comment>
<comment type="interaction">
    <interactant intactId="EBI-641666">
        <id>Q15172</id>
    </interactant>
    <interactant intactId="EBI-998108">
        <id>Q86YF9</id>
        <label>DZIP1</label>
    </interactant>
    <organismsDiffer>false</organismsDiffer>
    <experiments>4</experiments>
</comment>
<comment type="interaction">
    <interactant intactId="EBI-641666">
        <id>Q15172</id>
    </interactant>
    <interactant intactId="EBI-18398448">
        <id>A6NGS2</id>
        <label>ERICH4</label>
    </interactant>
    <organismsDiffer>false</organismsDiffer>
    <experiments>3</experiments>
</comment>
<comment type="interaction">
    <interactant intactId="EBI-641666">
        <id>Q15172</id>
    </interactant>
    <interactant intactId="EBI-641642">
        <id>Q9BVP2</id>
        <label>GNL3</label>
    </interactant>
    <organismsDiffer>false</organismsDiffer>
    <experiments>3</experiments>
</comment>
<comment type="interaction">
    <interactant intactId="EBI-641666">
        <id>Q15172</id>
    </interactant>
    <interactant intactId="EBI-1757866">
        <id>P00540</id>
        <label>MOS</label>
    </interactant>
    <organismsDiffer>false</organismsDiffer>
    <experiments>5</experiments>
</comment>
<comment type="interaction">
    <interactant intactId="EBI-641666">
        <id>Q15172</id>
    </interactant>
    <interactant intactId="EBI-745426">
        <id>Q13136</id>
        <label>PPFIA1</label>
    </interactant>
    <organismsDiffer>false</organismsDiffer>
    <experiments>3</experiments>
</comment>
<comment type="interaction">
    <interactant intactId="EBI-641666">
        <id>Q15172</id>
    </interactant>
    <interactant intactId="EBI-712311">
        <id>P67775</id>
        <label>PPP2CA</label>
    </interactant>
    <organismsDiffer>false</organismsDiffer>
    <experiments>8</experiments>
</comment>
<comment type="interaction">
    <interactant intactId="EBI-641666">
        <id>Q15172</id>
    </interactant>
    <interactant intactId="EBI-302388">
        <id>P30153</id>
        <label>PPP2R1A</label>
    </interactant>
    <organismsDiffer>false</organismsDiffer>
    <experiments>8</experiments>
</comment>
<comment type="interaction">
    <interactant intactId="EBI-641666">
        <id>Q15172</id>
    </interactant>
    <interactant intactId="EBI-357094">
        <id>P30154</id>
        <label>PPP2R1B</label>
    </interactant>
    <organismsDiffer>false</organismsDiffer>
    <experiments>4</experiments>
</comment>
<comment type="interaction">
    <interactant intactId="EBI-641666">
        <id>Q15172</id>
    </interactant>
    <interactant intactId="EBI-989069">
        <id>Q5FBB7</id>
        <label>SGO1</label>
    </interactant>
    <organismsDiffer>false</organismsDiffer>
    <experiments>5</experiments>
</comment>
<comment type="interaction">
    <interactant intactId="EBI-641666">
        <id>Q15172</id>
    </interactant>
    <interactant intactId="EBI-989213">
        <id>Q562F6</id>
        <label>SGO2</label>
    </interactant>
    <organismsDiffer>false</organismsDiffer>
    <experiments>3</experiments>
</comment>
<comment type="interaction">
    <interactant intactId="EBI-641666">
        <id>Q15172</id>
    </interactant>
    <interactant intactId="EBI-11955083">
        <id>Q9NUL5-4</id>
        <label>SHFL</label>
    </interactant>
    <organismsDiffer>false</organismsDiffer>
    <experiments>3</experiments>
</comment>
<comment type="interaction">
    <interactant intactId="EBI-641666">
        <id>Q15172</id>
    </interactant>
    <interactant intactId="EBI-5235340">
        <id>Q7Z699</id>
        <label>SPRED1</label>
    </interactant>
    <organismsDiffer>false</organismsDiffer>
    <experiments>3</experiments>
</comment>
<comment type="interaction">
    <interactant intactId="EBI-641666">
        <id>Q15172</id>
    </interactant>
    <interactant intactId="EBI-17559309">
        <id>P45379-11</id>
        <label>TNNT2</label>
    </interactant>
    <organismsDiffer>false</organismsDiffer>
    <experiments>3</experiments>
</comment>
<comment type="interaction">
    <interactant intactId="EBI-641666">
        <id>Q15172</id>
    </interactant>
    <interactant intactId="EBI-739895">
        <id>Q8N6Y0</id>
        <label>USHBP1</label>
    </interactant>
    <organismsDiffer>false</organismsDiffer>
    <experiments>3</experiments>
</comment>
<comment type="subcellular location">
    <subcellularLocation>
        <location evidence="3">Cytoplasm</location>
    </subcellularLocation>
    <subcellularLocation>
        <location evidence="3">Nucleus</location>
    </subcellularLocation>
    <subcellularLocation>
        <location evidence="2">Chromosome</location>
        <location evidence="2">Centromere</location>
    </subcellularLocation>
    <text evidence="2">From mitotic prophase to metaphase, localizes at the inner centromere between a pair of sister kinetochores. Decreased expression at the onset of anaphase.</text>
</comment>
<comment type="alternative products">
    <event type="alternative splicing"/>
    <isoform>
        <id>Q15172-1</id>
        <name>1</name>
        <sequence type="displayed"/>
    </isoform>
    <isoform>
        <id>Q15172-2</id>
        <name>2</name>
        <sequence type="described" ref="VSP_042889"/>
    </isoform>
</comment>
<comment type="tissue specificity">
    <text>Widely expressed with the highest expression in heart and skeletal muscle.</text>
</comment>
<comment type="PTM">
    <text evidence="3">Phosphorylated on serine residues.</text>
</comment>
<comment type="similarity">
    <text evidence="5">Belongs to the phosphatase 2A regulatory subunit B56 family.</text>
</comment>
<sequence>MSSSSPPAGAASAAISASEKVDGFTRKSVRKAQRQKRSQGSSQFRSQGSQAELHPLPQLKDATSNEQQELFCQKLQQCCILFDFMDSVSDLKSKEIKRATLNELVEYVSTNRGVIVESAYSDIVKMISANIFRTLPPSDNPDFDPEEDEPTLEASWPHIQLVYEFFLRFLESPDFQPSIAKRYIDQKFVQQLLELFDSEDPRERDFLKTVLHRIYGKFLGLRAFIRKQINNIFLRFIYETEHFNGVAELLEILGSIINGFALPLKAEHKQFLMKVLIPMHTAKGLALFHAQLAYCVVQFLEKDTTLTEPVIRGLLKFWPKTCSQKEVMFLGEIEEILDVIEPTQFKKIEEPLFKQISKCVSSSHFQVAERALYFWNNEYILSLIEENIDKILPIMFASLYKISKEHWNPTIVALVYNVLKTLMEMNGKLFDDLTSSYKAERQREKKKELEREELWKKLEELKLKKALEKQNSAYNMHSILSNTSAE</sequence>
<reference key="1">
    <citation type="journal article" date="1995" name="J. Biol. Chem.">
        <title>Identification of a new family of protein phosphatase 2A regulatory subunits.</title>
        <authorList>
            <person name="McCright B."/>
            <person name="Virshup D.M."/>
        </authorList>
    </citation>
    <scope>NUCLEOTIDE SEQUENCE [MRNA] (ISOFORM 1)</scope>
    <source>
        <tissue>Mammary cancer</tissue>
    </source>
</reference>
<reference key="2">
    <citation type="journal article" date="2004" name="Nat. Genet.">
        <title>Complete sequencing and characterization of 21,243 full-length human cDNAs.</title>
        <authorList>
            <person name="Ota T."/>
            <person name="Suzuki Y."/>
            <person name="Nishikawa T."/>
            <person name="Otsuki T."/>
            <person name="Sugiyama T."/>
            <person name="Irie R."/>
            <person name="Wakamatsu A."/>
            <person name="Hayashi K."/>
            <person name="Sato H."/>
            <person name="Nagai K."/>
            <person name="Kimura K."/>
            <person name="Makita H."/>
            <person name="Sekine M."/>
            <person name="Obayashi M."/>
            <person name="Nishi T."/>
            <person name="Shibahara T."/>
            <person name="Tanaka T."/>
            <person name="Ishii S."/>
            <person name="Yamamoto J."/>
            <person name="Saito K."/>
            <person name="Kawai Y."/>
            <person name="Isono Y."/>
            <person name="Nakamura Y."/>
            <person name="Nagahari K."/>
            <person name="Murakami K."/>
            <person name="Yasuda T."/>
            <person name="Iwayanagi T."/>
            <person name="Wagatsuma M."/>
            <person name="Shiratori A."/>
            <person name="Sudo H."/>
            <person name="Hosoiri T."/>
            <person name="Kaku Y."/>
            <person name="Kodaira H."/>
            <person name="Kondo H."/>
            <person name="Sugawara M."/>
            <person name="Takahashi M."/>
            <person name="Kanda K."/>
            <person name="Yokoi T."/>
            <person name="Furuya T."/>
            <person name="Kikkawa E."/>
            <person name="Omura Y."/>
            <person name="Abe K."/>
            <person name="Kamihara K."/>
            <person name="Katsuta N."/>
            <person name="Sato K."/>
            <person name="Tanikawa M."/>
            <person name="Yamazaki M."/>
            <person name="Ninomiya K."/>
            <person name="Ishibashi T."/>
            <person name="Yamashita H."/>
            <person name="Murakawa K."/>
            <person name="Fujimori K."/>
            <person name="Tanai H."/>
            <person name="Kimata M."/>
            <person name="Watanabe M."/>
            <person name="Hiraoka S."/>
            <person name="Chiba Y."/>
            <person name="Ishida S."/>
            <person name="Ono Y."/>
            <person name="Takiguchi S."/>
            <person name="Watanabe S."/>
            <person name="Yosida M."/>
            <person name="Hotuta T."/>
            <person name="Kusano J."/>
            <person name="Kanehori K."/>
            <person name="Takahashi-Fujii A."/>
            <person name="Hara H."/>
            <person name="Tanase T.-O."/>
            <person name="Nomura Y."/>
            <person name="Togiya S."/>
            <person name="Komai F."/>
            <person name="Hara R."/>
            <person name="Takeuchi K."/>
            <person name="Arita M."/>
            <person name="Imose N."/>
            <person name="Musashino K."/>
            <person name="Yuuki H."/>
            <person name="Oshima A."/>
            <person name="Sasaki N."/>
            <person name="Aotsuka S."/>
            <person name="Yoshikawa Y."/>
            <person name="Matsunawa H."/>
            <person name="Ichihara T."/>
            <person name="Shiohata N."/>
            <person name="Sano S."/>
            <person name="Moriya S."/>
            <person name="Momiyama H."/>
            <person name="Satoh N."/>
            <person name="Takami S."/>
            <person name="Terashima Y."/>
            <person name="Suzuki O."/>
            <person name="Nakagawa S."/>
            <person name="Senoh A."/>
            <person name="Mizoguchi H."/>
            <person name="Goto Y."/>
            <person name="Shimizu F."/>
            <person name="Wakebe H."/>
            <person name="Hishigaki H."/>
            <person name="Watanabe T."/>
            <person name="Sugiyama A."/>
            <person name="Takemoto M."/>
            <person name="Kawakami B."/>
            <person name="Yamazaki M."/>
            <person name="Watanabe K."/>
            <person name="Kumagai A."/>
            <person name="Itakura S."/>
            <person name="Fukuzumi Y."/>
            <person name="Fujimori Y."/>
            <person name="Komiyama M."/>
            <person name="Tashiro H."/>
            <person name="Tanigami A."/>
            <person name="Fujiwara T."/>
            <person name="Ono T."/>
            <person name="Yamada K."/>
            <person name="Fujii Y."/>
            <person name="Ozaki K."/>
            <person name="Hirao M."/>
            <person name="Ohmori Y."/>
            <person name="Kawabata A."/>
            <person name="Hikiji T."/>
            <person name="Kobatake N."/>
            <person name="Inagaki H."/>
            <person name="Ikema Y."/>
            <person name="Okamoto S."/>
            <person name="Okitani R."/>
            <person name="Kawakami T."/>
            <person name="Noguchi S."/>
            <person name="Itoh T."/>
            <person name="Shigeta K."/>
            <person name="Senba T."/>
            <person name="Matsumura K."/>
            <person name="Nakajima Y."/>
            <person name="Mizuno T."/>
            <person name="Morinaga M."/>
            <person name="Sasaki M."/>
            <person name="Togashi T."/>
            <person name="Oyama M."/>
            <person name="Hata H."/>
            <person name="Watanabe M."/>
            <person name="Komatsu T."/>
            <person name="Mizushima-Sugano J."/>
            <person name="Satoh T."/>
            <person name="Shirai Y."/>
            <person name="Takahashi Y."/>
            <person name="Nakagawa K."/>
            <person name="Okumura K."/>
            <person name="Nagase T."/>
            <person name="Nomura N."/>
            <person name="Kikuchi H."/>
            <person name="Masuho Y."/>
            <person name="Yamashita R."/>
            <person name="Nakai K."/>
            <person name="Yada T."/>
            <person name="Nakamura Y."/>
            <person name="Ohara O."/>
            <person name="Isogai T."/>
            <person name="Sugano S."/>
        </authorList>
    </citation>
    <scope>NUCLEOTIDE SEQUENCE [LARGE SCALE MRNA] (ISOFORMS 1 AND 2)</scope>
    <source>
        <tissue>Testis</tissue>
        <tissue>Tongue</tissue>
    </source>
</reference>
<reference key="3">
    <citation type="journal article" date="2006" name="Nature">
        <title>The DNA sequence and biological annotation of human chromosome 1.</title>
        <authorList>
            <person name="Gregory S.G."/>
            <person name="Barlow K.F."/>
            <person name="McLay K.E."/>
            <person name="Kaul R."/>
            <person name="Swarbreck D."/>
            <person name="Dunham A."/>
            <person name="Scott C.E."/>
            <person name="Howe K.L."/>
            <person name="Woodfine K."/>
            <person name="Spencer C.C.A."/>
            <person name="Jones M.C."/>
            <person name="Gillson C."/>
            <person name="Searle S."/>
            <person name="Zhou Y."/>
            <person name="Kokocinski F."/>
            <person name="McDonald L."/>
            <person name="Evans R."/>
            <person name="Phillips K."/>
            <person name="Atkinson A."/>
            <person name="Cooper R."/>
            <person name="Jones C."/>
            <person name="Hall R.E."/>
            <person name="Andrews T.D."/>
            <person name="Lloyd C."/>
            <person name="Ainscough R."/>
            <person name="Almeida J.P."/>
            <person name="Ambrose K.D."/>
            <person name="Anderson F."/>
            <person name="Andrew R.W."/>
            <person name="Ashwell R.I.S."/>
            <person name="Aubin K."/>
            <person name="Babbage A.K."/>
            <person name="Bagguley C.L."/>
            <person name="Bailey J."/>
            <person name="Beasley H."/>
            <person name="Bethel G."/>
            <person name="Bird C.P."/>
            <person name="Bray-Allen S."/>
            <person name="Brown J.Y."/>
            <person name="Brown A.J."/>
            <person name="Buckley D."/>
            <person name="Burton J."/>
            <person name="Bye J."/>
            <person name="Carder C."/>
            <person name="Chapman J.C."/>
            <person name="Clark S.Y."/>
            <person name="Clarke G."/>
            <person name="Clee C."/>
            <person name="Cobley V."/>
            <person name="Collier R.E."/>
            <person name="Corby N."/>
            <person name="Coville G.J."/>
            <person name="Davies J."/>
            <person name="Deadman R."/>
            <person name="Dunn M."/>
            <person name="Earthrowl M."/>
            <person name="Ellington A.G."/>
            <person name="Errington H."/>
            <person name="Frankish A."/>
            <person name="Frankland J."/>
            <person name="French L."/>
            <person name="Garner P."/>
            <person name="Garnett J."/>
            <person name="Gay L."/>
            <person name="Ghori M.R.J."/>
            <person name="Gibson R."/>
            <person name="Gilby L.M."/>
            <person name="Gillett W."/>
            <person name="Glithero R.J."/>
            <person name="Grafham D.V."/>
            <person name="Griffiths C."/>
            <person name="Griffiths-Jones S."/>
            <person name="Grocock R."/>
            <person name="Hammond S."/>
            <person name="Harrison E.S.I."/>
            <person name="Hart E."/>
            <person name="Haugen E."/>
            <person name="Heath P.D."/>
            <person name="Holmes S."/>
            <person name="Holt K."/>
            <person name="Howden P.J."/>
            <person name="Hunt A.R."/>
            <person name="Hunt S.E."/>
            <person name="Hunter G."/>
            <person name="Isherwood J."/>
            <person name="James R."/>
            <person name="Johnson C."/>
            <person name="Johnson D."/>
            <person name="Joy A."/>
            <person name="Kay M."/>
            <person name="Kershaw J.K."/>
            <person name="Kibukawa M."/>
            <person name="Kimberley A.M."/>
            <person name="King A."/>
            <person name="Knights A.J."/>
            <person name="Lad H."/>
            <person name="Laird G."/>
            <person name="Lawlor S."/>
            <person name="Leongamornlert D.A."/>
            <person name="Lloyd D.M."/>
            <person name="Loveland J."/>
            <person name="Lovell J."/>
            <person name="Lush M.J."/>
            <person name="Lyne R."/>
            <person name="Martin S."/>
            <person name="Mashreghi-Mohammadi M."/>
            <person name="Matthews L."/>
            <person name="Matthews N.S.W."/>
            <person name="McLaren S."/>
            <person name="Milne S."/>
            <person name="Mistry S."/>
            <person name="Moore M.J.F."/>
            <person name="Nickerson T."/>
            <person name="O'Dell C.N."/>
            <person name="Oliver K."/>
            <person name="Palmeiri A."/>
            <person name="Palmer S.A."/>
            <person name="Parker A."/>
            <person name="Patel D."/>
            <person name="Pearce A.V."/>
            <person name="Peck A.I."/>
            <person name="Pelan S."/>
            <person name="Phelps K."/>
            <person name="Phillimore B.J."/>
            <person name="Plumb R."/>
            <person name="Rajan J."/>
            <person name="Raymond C."/>
            <person name="Rouse G."/>
            <person name="Saenphimmachak C."/>
            <person name="Sehra H.K."/>
            <person name="Sheridan E."/>
            <person name="Shownkeen R."/>
            <person name="Sims S."/>
            <person name="Skuce C.D."/>
            <person name="Smith M."/>
            <person name="Steward C."/>
            <person name="Subramanian S."/>
            <person name="Sycamore N."/>
            <person name="Tracey A."/>
            <person name="Tromans A."/>
            <person name="Van Helmond Z."/>
            <person name="Wall M."/>
            <person name="Wallis J.M."/>
            <person name="White S."/>
            <person name="Whitehead S.L."/>
            <person name="Wilkinson J.E."/>
            <person name="Willey D.L."/>
            <person name="Williams H."/>
            <person name="Wilming L."/>
            <person name="Wray P.W."/>
            <person name="Wu Z."/>
            <person name="Coulson A."/>
            <person name="Vaudin M."/>
            <person name="Sulston J.E."/>
            <person name="Durbin R.M."/>
            <person name="Hubbard T."/>
            <person name="Wooster R."/>
            <person name="Dunham I."/>
            <person name="Carter N.P."/>
            <person name="McVean G."/>
            <person name="Ross M.T."/>
            <person name="Harrow J."/>
            <person name="Olson M.V."/>
            <person name="Beck S."/>
            <person name="Rogers J."/>
            <person name="Bentley D.R."/>
        </authorList>
    </citation>
    <scope>NUCLEOTIDE SEQUENCE [LARGE SCALE GENOMIC DNA]</scope>
</reference>
<reference key="4">
    <citation type="submission" date="2005-09" db="EMBL/GenBank/DDBJ databases">
        <authorList>
            <person name="Mural R.J."/>
            <person name="Istrail S."/>
            <person name="Sutton G.G."/>
            <person name="Florea L."/>
            <person name="Halpern A.L."/>
            <person name="Mobarry C.M."/>
            <person name="Lippert R."/>
            <person name="Walenz B."/>
            <person name="Shatkay H."/>
            <person name="Dew I."/>
            <person name="Miller J.R."/>
            <person name="Flanigan M.J."/>
            <person name="Edwards N.J."/>
            <person name="Bolanos R."/>
            <person name="Fasulo D."/>
            <person name="Halldorsson B.V."/>
            <person name="Hannenhalli S."/>
            <person name="Turner R."/>
            <person name="Yooseph S."/>
            <person name="Lu F."/>
            <person name="Nusskern D.R."/>
            <person name="Shue B.C."/>
            <person name="Zheng X.H."/>
            <person name="Zhong F."/>
            <person name="Delcher A.L."/>
            <person name="Huson D.H."/>
            <person name="Kravitz S.A."/>
            <person name="Mouchard L."/>
            <person name="Reinert K."/>
            <person name="Remington K.A."/>
            <person name="Clark A.G."/>
            <person name="Waterman M.S."/>
            <person name="Eichler E.E."/>
            <person name="Adams M.D."/>
            <person name="Hunkapiller M.W."/>
            <person name="Myers E.W."/>
            <person name="Venter J.C."/>
        </authorList>
    </citation>
    <scope>NUCLEOTIDE SEQUENCE [LARGE SCALE GENOMIC DNA]</scope>
</reference>
<reference key="5">
    <citation type="journal article" date="2004" name="Genome Res.">
        <title>The status, quality, and expansion of the NIH full-length cDNA project: the Mammalian Gene Collection (MGC).</title>
        <authorList>
            <consortium name="The MGC Project Team"/>
        </authorList>
    </citation>
    <scope>NUCLEOTIDE SEQUENCE [LARGE SCALE MRNA] (ISOFORM 1)</scope>
    <source>
        <tissue>Hippocampus</tissue>
        <tissue>Testis</tissue>
    </source>
</reference>
<reference key="6">
    <citation type="journal article" date="1996" name="Biochem. J.">
        <title>The variable subunit associated with protein phosphatase 2A0 defines a novel multimember family of regulatory subunits.</title>
        <authorList>
            <person name="Zolnierowicz S."/>
            <person name="van Hoof C."/>
            <person name="Andjelkovic N."/>
            <person name="Cron P."/>
            <person name="Stevens I."/>
            <person name="Merlevede W."/>
            <person name="Goris J."/>
            <person name="Hemmings B.A."/>
        </authorList>
    </citation>
    <scope>PROTEIN SEQUENCE OF 47-56; 129-132; 347-354; 448-462 AND 471-480</scope>
    <source>
        <tissue>Brain</tissue>
    </source>
</reference>
<reference key="7">
    <citation type="journal article" date="1996" name="J. Biol. Chem.">
        <title>The B56 family of protein phosphatase 2A (PP2A) regulatory subunits encodes differentiation-induced phosphoproteins that target PP2A to both nucleus and cytoplasm.</title>
        <authorList>
            <person name="McCright B."/>
            <person name="Rivers A.M."/>
            <person name="Audlin S."/>
            <person name="Virshup D.M."/>
        </authorList>
    </citation>
    <scope>PHOSPHORYLATION</scope>
    <scope>SUBCELLULAR LOCATION</scope>
</reference>
<reference key="8">
    <citation type="journal article" date="2006" name="Nature">
        <title>Shugoshin collaborates with protein phosphatase 2A to protect cohesin.</title>
        <authorList>
            <person name="Kitajima T.S."/>
            <person name="Sakuno T."/>
            <person name="Ishiguro K."/>
            <person name="Iemura S."/>
            <person name="Natsume T."/>
            <person name="Kawashima S.A."/>
            <person name="Watanabe Y."/>
        </authorList>
    </citation>
    <scope>SUBCELLULAR LOCATION</scope>
    <scope>INTERACTION WITH SGO1</scope>
</reference>
<reference key="9">
    <citation type="journal article" date="2008" name="Proc. Natl. Acad. Sci. U.S.A.">
        <title>A quantitative atlas of mitotic phosphorylation.</title>
        <authorList>
            <person name="Dephoure N."/>
            <person name="Zhou C."/>
            <person name="Villen J."/>
            <person name="Beausoleil S.A."/>
            <person name="Bakalarski C.E."/>
            <person name="Elledge S.J."/>
            <person name="Gygi S.P."/>
        </authorList>
    </citation>
    <scope>PHOSPHORYLATION [LARGE SCALE ANALYSIS] AT SER-41 AND SER-42</scope>
    <scope>IDENTIFICATION BY MASS SPECTROMETRY [LARGE SCALE ANALYSIS]</scope>
    <source>
        <tissue>Cervix carcinoma</tissue>
    </source>
</reference>
<reference key="10">
    <citation type="journal article" date="2010" name="Sci. Signal.">
        <title>Quantitative phosphoproteomics reveals widespread full phosphorylation site occupancy during mitosis.</title>
        <authorList>
            <person name="Olsen J.V."/>
            <person name="Vermeulen M."/>
            <person name="Santamaria A."/>
            <person name="Kumar C."/>
            <person name="Miller M.L."/>
            <person name="Jensen L.J."/>
            <person name="Gnad F."/>
            <person name="Cox J."/>
            <person name="Jensen T.S."/>
            <person name="Nigg E.A."/>
            <person name="Brunak S."/>
            <person name="Mann M."/>
        </authorList>
    </citation>
    <scope>PHOSPHORYLATION [LARGE SCALE ANALYSIS] AT SER-41 AND SER-42</scope>
    <scope>IDENTIFICATION BY MASS SPECTROMETRY [LARGE SCALE ANALYSIS]</scope>
    <source>
        <tissue>Cervix carcinoma</tissue>
    </source>
</reference>
<reference key="11">
    <citation type="journal article" date="2011" name="BMC Syst. Biol.">
        <title>Initial characterization of the human central proteome.</title>
        <authorList>
            <person name="Burkard T.R."/>
            <person name="Planyavsky M."/>
            <person name="Kaupe I."/>
            <person name="Breitwieser F.P."/>
            <person name="Buerckstuemmer T."/>
            <person name="Bennett K.L."/>
            <person name="Superti-Furga G."/>
            <person name="Colinge J."/>
        </authorList>
    </citation>
    <scope>IDENTIFICATION BY MASS SPECTROMETRY [LARGE SCALE ANALYSIS]</scope>
</reference>
<reference key="12">
    <citation type="journal article" date="2011" name="Sci. Signal.">
        <title>System-wide temporal characterization of the proteome and phosphoproteome of human embryonic stem cell differentiation.</title>
        <authorList>
            <person name="Rigbolt K.T."/>
            <person name="Prokhorova T.A."/>
            <person name="Akimov V."/>
            <person name="Henningsen J."/>
            <person name="Johansen P.T."/>
            <person name="Kratchmarova I."/>
            <person name="Kassem M."/>
            <person name="Mann M."/>
            <person name="Olsen J.V."/>
            <person name="Blagoev B."/>
        </authorList>
    </citation>
    <scope>PHOSPHORYLATION [LARGE SCALE ANALYSIS] AT SER-41 AND SER-42</scope>
    <scope>IDENTIFICATION BY MASS SPECTROMETRY [LARGE SCALE ANALYSIS]</scope>
</reference>
<reference key="13">
    <citation type="journal article" date="2012" name="Mol. Cell. Proteomics">
        <title>Comparative large-scale characterisation of plant vs. mammal proteins reveals similar and idiosyncratic N-alpha acetylation features.</title>
        <authorList>
            <person name="Bienvenut W.V."/>
            <person name="Sumpton D."/>
            <person name="Martinez A."/>
            <person name="Lilla S."/>
            <person name="Espagne C."/>
            <person name="Meinnel T."/>
            <person name="Giglione C."/>
        </authorList>
    </citation>
    <scope>ACETYLATION [LARGE SCALE ANALYSIS] AT SER-2</scope>
    <scope>CLEAVAGE OF INITIATOR METHIONINE [LARGE SCALE ANALYSIS]</scope>
    <scope>IDENTIFICATION BY MASS SPECTROMETRY [LARGE SCALE ANALYSIS]</scope>
</reference>
<reference key="14">
    <citation type="journal article" date="2013" name="J. Proteome Res.">
        <title>Toward a comprehensive characterization of a human cancer cell phosphoproteome.</title>
        <authorList>
            <person name="Zhou H."/>
            <person name="Di Palma S."/>
            <person name="Preisinger C."/>
            <person name="Peng M."/>
            <person name="Polat A.N."/>
            <person name="Heck A.J."/>
            <person name="Mohammed S."/>
        </authorList>
    </citation>
    <scope>PHOSPHORYLATION [LARGE SCALE ANALYSIS] AT SER-41; SER-42 AND SER-49</scope>
    <scope>IDENTIFICATION BY MASS SPECTROMETRY [LARGE SCALE ANALYSIS]</scope>
    <source>
        <tissue>Cervix carcinoma</tissue>
        <tissue>Erythroleukemia</tissue>
    </source>
</reference>
<reference key="15">
    <citation type="journal article" date="2014" name="J. Proteomics">
        <title>An enzyme assisted RP-RPLC approach for in-depth analysis of human liver phosphoproteome.</title>
        <authorList>
            <person name="Bian Y."/>
            <person name="Song C."/>
            <person name="Cheng K."/>
            <person name="Dong M."/>
            <person name="Wang F."/>
            <person name="Huang J."/>
            <person name="Sun D."/>
            <person name="Wang L."/>
            <person name="Ye M."/>
            <person name="Zou H."/>
        </authorList>
    </citation>
    <scope>IDENTIFICATION BY MASS SPECTROMETRY [LARGE SCALE ANALYSIS]</scope>
    <source>
        <tissue>Liver</tissue>
    </source>
</reference>
<proteinExistence type="evidence at protein level"/>